<keyword id="KW-0028">Amino-acid biosynthesis</keyword>
<keyword id="KW-0032">Aminotransferase</keyword>
<keyword id="KW-0055">Arginine biosynthesis</keyword>
<keyword id="KW-0963">Cytoplasm</keyword>
<keyword id="KW-0663">Pyridoxal phosphate</keyword>
<keyword id="KW-1185">Reference proteome</keyword>
<keyword id="KW-0808">Transferase</keyword>
<reference key="1">
    <citation type="journal article" date="2002" name="Nature">
        <title>Comparison of the genomes of two Xanthomonas pathogens with differing host specificities.</title>
        <authorList>
            <person name="da Silva A.C.R."/>
            <person name="Ferro J.A."/>
            <person name="Reinach F.C."/>
            <person name="Farah C.S."/>
            <person name="Furlan L.R."/>
            <person name="Quaggio R.B."/>
            <person name="Monteiro-Vitorello C.B."/>
            <person name="Van Sluys M.A."/>
            <person name="Almeida N.F. Jr."/>
            <person name="Alves L.M.C."/>
            <person name="do Amaral A.M."/>
            <person name="Bertolini M.C."/>
            <person name="Camargo L.E.A."/>
            <person name="Camarotte G."/>
            <person name="Cannavan F."/>
            <person name="Cardozo J."/>
            <person name="Chambergo F."/>
            <person name="Ciapina L.P."/>
            <person name="Cicarelli R.M.B."/>
            <person name="Coutinho L.L."/>
            <person name="Cursino-Santos J.R."/>
            <person name="El-Dorry H."/>
            <person name="Faria J.B."/>
            <person name="Ferreira A.J.S."/>
            <person name="Ferreira R.C.C."/>
            <person name="Ferro M.I.T."/>
            <person name="Formighieri E.F."/>
            <person name="Franco M.C."/>
            <person name="Greggio C.C."/>
            <person name="Gruber A."/>
            <person name="Katsuyama A.M."/>
            <person name="Kishi L.T."/>
            <person name="Leite R.P."/>
            <person name="Lemos E.G.M."/>
            <person name="Lemos M.V.F."/>
            <person name="Locali E.C."/>
            <person name="Machado M.A."/>
            <person name="Madeira A.M.B.N."/>
            <person name="Martinez-Rossi N.M."/>
            <person name="Martins E.C."/>
            <person name="Meidanis J."/>
            <person name="Menck C.F.M."/>
            <person name="Miyaki C.Y."/>
            <person name="Moon D.H."/>
            <person name="Moreira L.M."/>
            <person name="Novo M.T.M."/>
            <person name="Okura V.K."/>
            <person name="Oliveira M.C."/>
            <person name="Oliveira V.R."/>
            <person name="Pereira H.A."/>
            <person name="Rossi A."/>
            <person name="Sena J.A.D."/>
            <person name="Silva C."/>
            <person name="de Souza R.F."/>
            <person name="Spinola L.A.F."/>
            <person name="Takita M.A."/>
            <person name="Tamura R.E."/>
            <person name="Teixeira E.C."/>
            <person name="Tezza R.I.D."/>
            <person name="Trindade dos Santos M."/>
            <person name="Truffi D."/>
            <person name="Tsai S.M."/>
            <person name="White F.F."/>
            <person name="Setubal J.C."/>
            <person name="Kitajima J.P."/>
        </authorList>
    </citation>
    <scope>NUCLEOTIDE SEQUENCE [LARGE SCALE GENOMIC DNA]</scope>
    <source>
        <strain>ATCC 33913 / DSM 3586 / NCPPB 528 / LMG 568 / P 25</strain>
    </source>
</reference>
<accession>Q8P5Q4</accession>
<gene>
    <name evidence="1" type="primary">argD</name>
    <name type="ordered locus">XCC3282</name>
</gene>
<feature type="chain" id="PRO_0000112814" description="Acetylornithine aminotransferase">
    <location>
        <begin position="1"/>
        <end position="408"/>
    </location>
</feature>
<feature type="binding site" evidence="1">
    <location>
        <begin position="107"/>
        <end position="108"/>
    </location>
    <ligand>
        <name>pyridoxal 5'-phosphate</name>
        <dbReference type="ChEBI" id="CHEBI:597326"/>
    </ligand>
</feature>
<feature type="binding site" evidence="1">
    <location>
        <position position="141"/>
    </location>
    <ligand>
        <name>pyridoxal 5'-phosphate</name>
        <dbReference type="ChEBI" id="CHEBI:597326"/>
    </ligand>
</feature>
<feature type="binding site" evidence="1">
    <location>
        <position position="144"/>
    </location>
    <ligand>
        <name>N(2)-acetyl-L-ornithine</name>
        <dbReference type="ChEBI" id="CHEBI:57805"/>
    </ligand>
</feature>
<feature type="binding site" evidence="1">
    <location>
        <begin position="227"/>
        <end position="230"/>
    </location>
    <ligand>
        <name>pyridoxal 5'-phosphate</name>
        <dbReference type="ChEBI" id="CHEBI:597326"/>
    </ligand>
</feature>
<feature type="binding site" evidence="1">
    <location>
        <position position="284"/>
    </location>
    <ligand>
        <name>N(2)-acetyl-L-ornithine</name>
        <dbReference type="ChEBI" id="CHEBI:57805"/>
    </ligand>
</feature>
<feature type="binding site" evidence="1">
    <location>
        <position position="285"/>
    </location>
    <ligand>
        <name>pyridoxal 5'-phosphate</name>
        <dbReference type="ChEBI" id="CHEBI:597326"/>
    </ligand>
</feature>
<feature type="modified residue" description="N6-(pyridoxal phosphate)lysine" evidence="1">
    <location>
        <position position="256"/>
    </location>
</feature>
<evidence type="ECO:0000255" key="1">
    <source>
        <dbReference type="HAMAP-Rule" id="MF_01107"/>
    </source>
</evidence>
<proteinExistence type="inferred from homology"/>
<comment type="catalytic activity">
    <reaction evidence="1">
        <text>N(2)-acetyl-L-ornithine + 2-oxoglutarate = N-acetyl-L-glutamate 5-semialdehyde + L-glutamate</text>
        <dbReference type="Rhea" id="RHEA:18049"/>
        <dbReference type="ChEBI" id="CHEBI:16810"/>
        <dbReference type="ChEBI" id="CHEBI:29123"/>
        <dbReference type="ChEBI" id="CHEBI:29985"/>
        <dbReference type="ChEBI" id="CHEBI:57805"/>
        <dbReference type="EC" id="2.6.1.11"/>
    </reaction>
</comment>
<comment type="cofactor">
    <cofactor evidence="1">
        <name>pyridoxal 5'-phosphate</name>
        <dbReference type="ChEBI" id="CHEBI:597326"/>
    </cofactor>
    <text evidence="1">Binds 1 pyridoxal phosphate per subunit.</text>
</comment>
<comment type="pathway">
    <text evidence="1">Amino-acid biosynthesis; L-arginine biosynthesis; N(2)-acetyl-L-ornithine from L-glutamate: step 4/4.</text>
</comment>
<comment type="subunit">
    <text evidence="1">Homodimer.</text>
</comment>
<comment type="subcellular location">
    <subcellularLocation>
        <location evidence="1">Cytoplasm</location>
    </subcellularLocation>
</comment>
<comment type="miscellaneous">
    <text evidence="1">May also have succinyldiaminopimelate aminotransferase activity, thus carrying out the corresponding step in lysine biosynthesis.</text>
</comment>
<comment type="similarity">
    <text evidence="1">Belongs to the class-III pyridoxal-phosphate-dependent aminotransferase family. ArgD subfamily.</text>
</comment>
<protein>
    <recommendedName>
        <fullName evidence="1">Acetylornithine aminotransferase</fullName>
        <shortName evidence="1">ACOAT</shortName>
        <ecNumber evidence="1">2.6.1.11</ecNumber>
    </recommendedName>
</protein>
<name>ARGD_XANCP</name>
<sequence>MSTAADSPLSLAHYYLPVYRPRQVVLERGQGSRVWDDQGREYLDLSSGIAVSGLGHNDPDLMAALTEQAGKLWHTSNVFFSAPPLKLAEELVTASRFAQKVFLCNSGTEANEAAIKLVRKWASSQGRPADKRVIVTFRGSFHGRTLASVTATAQPKYQEGYEPLPGGFRYVDFNDVPALESAMASGDVAAVMLEPIQGEGGVMPAAPGFLARVRALCDQHDALLVLDEIQCGMGRTGSLFAHWQEQVTPDIVTLAKALGGGFPIGAMLAGPKVAETMQFGAHGTTFGGNPLAAAVARVALRKLASPQIAENVARQSAALRAGLEALNAEFGVFAQIRGRGLMLGAVLAPAHAGQAGAILDLAAAHGLLLLQAGPDVLRFVPALNLTDAELADGLARLRLAIAAYVAQH</sequence>
<dbReference type="EC" id="2.6.1.11" evidence="1"/>
<dbReference type="EMBL" id="AE008922">
    <property type="protein sequence ID" value="AAM42552.1"/>
    <property type="molecule type" value="Genomic_DNA"/>
</dbReference>
<dbReference type="RefSeq" id="NP_638628.1">
    <property type="nucleotide sequence ID" value="NC_003902.1"/>
</dbReference>
<dbReference type="RefSeq" id="WP_011038384.1">
    <property type="nucleotide sequence ID" value="NC_003902.1"/>
</dbReference>
<dbReference type="SMR" id="Q8P5Q4"/>
<dbReference type="STRING" id="190485.XCC3282"/>
<dbReference type="EnsemblBacteria" id="AAM42552">
    <property type="protein sequence ID" value="AAM42552"/>
    <property type="gene ID" value="XCC3282"/>
</dbReference>
<dbReference type="KEGG" id="xcc:XCC3282"/>
<dbReference type="PATRIC" id="fig|190485.4.peg.3508"/>
<dbReference type="eggNOG" id="COG4992">
    <property type="taxonomic scope" value="Bacteria"/>
</dbReference>
<dbReference type="HOGENOM" id="CLU_016922_10_1_6"/>
<dbReference type="OrthoDB" id="9801052at2"/>
<dbReference type="UniPathway" id="UPA00068">
    <property type="reaction ID" value="UER00109"/>
</dbReference>
<dbReference type="Proteomes" id="UP000001010">
    <property type="component" value="Chromosome"/>
</dbReference>
<dbReference type="GO" id="GO:0005737">
    <property type="term" value="C:cytoplasm"/>
    <property type="evidence" value="ECO:0007669"/>
    <property type="project" value="UniProtKB-SubCell"/>
</dbReference>
<dbReference type="GO" id="GO:0042802">
    <property type="term" value="F:identical protein binding"/>
    <property type="evidence" value="ECO:0000318"/>
    <property type="project" value="GO_Central"/>
</dbReference>
<dbReference type="GO" id="GO:0003992">
    <property type="term" value="F:N2-acetyl-L-ornithine:2-oxoglutarate 5-aminotransferase activity"/>
    <property type="evidence" value="ECO:0007669"/>
    <property type="project" value="UniProtKB-UniRule"/>
</dbReference>
<dbReference type="GO" id="GO:0030170">
    <property type="term" value="F:pyridoxal phosphate binding"/>
    <property type="evidence" value="ECO:0000318"/>
    <property type="project" value="GO_Central"/>
</dbReference>
<dbReference type="GO" id="GO:0006526">
    <property type="term" value="P:L-arginine biosynthetic process"/>
    <property type="evidence" value="ECO:0007669"/>
    <property type="project" value="UniProtKB-UniRule"/>
</dbReference>
<dbReference type="CDD" id="cd00610">
    <property type="entry name" value="OAT_like"/>
    <property type="match status" value="1"/>
</dbReference>
<dbReference type="FunFam" id="3.40.640.10:FF:000117">
    <property type="entry name" value="Acetylornithine aminotransferase"/>
    <property type="match status" value="1"/>
</dbReference>
<dbReference type="Gene3D" id="3.90.1150.10">
    <property type="entry name" value="Aspartate Aminotransferase, domain 1"/>
    <property type="match status" value="1"/>
</dbReference>
<dbReference type="Gene3D" id="3.40.640.10">
    <property type="entry name" value="Type I PLP-dependent aspartate aminotransferase-like (Major domain)"/>
    <property type="match status" value="1"/>
</dbReference>
<dbReference type="HAMAP" id="MF_01107">
    <property type="entry name" value="ArgD_aminotrans_3"/>
    <property type="match status" value="1"/>
</dbReference>
<dbReference type="InterPro" id="IPR004636">
    <property type="entry name" value="AcOrn/SuccOrn_fam"/>
</dbReference>
<dbReference type="InterPro" id="IPR005814">
    <property type="entry name" value="Aminotrans_3"/>
</dbReference>
<dbReference type="InterPro" id="IPR049704">
    <property type="entry name" value="Aminotrans_3_PPA_site"/>
</dbReference>
<dbReference type="InterPro" id="IPR050103">
    <property type="entry name" value="Class-III_PLP-dep_AT"/>
</dbReference>
<dbReference type="InterPro" id="IPR015424">
    <property type="entry name" value="PyrdxlP-dep_Trfase"/>
</dbReference>
<dbReference type="InterPro" id="IPR015421">
    <property type="entry name" value="PyrdxlP-dep_Trfase_major"/>
</dbReference>
<dbReference type="InterPro" id="IPR015422">
    <property type="entry name" value="PyrdxlP-dep_Trfase_small"/>
</dbReference>
<dbReference type="NCBIfam" id="TIGR00707">
    <property type="entry name" value="argD"/>
    <property type="match status" value="1"/>
</dbReference>
<dbReference type="NCBIfam" id="NF002325">
    <property type="entry name" value="PRK01278.1"/>
    <property type="match status" value="1"/>
</dbReference>
<dbReference type="NCBIfam" id="NF003397">
    <property type="entry name" value="PRK04612.1"/>
    <property type="match status" value="1"/>
</dbReference>
<dbReference type="PANTHER" id="PTHR11986">
    <property type="entry name" value="AMINOTRANSFERASE CLASS III"/>
    <property type="match status" value="1"/>
</dbReference>
<dbReference type="PANTHER" id="PTHR11986:SF113">
    <property type="entry name" value="SUCCINYLORNITHINE TRANSAMINASE"/>
    <property type="match status" value="1"/>
</dbReference>
<dbReference type="Pfam" id="PF00202">
    <property type="entry name" value="Aminotran_3"/>
    <property type="match status" value="1"/>
</dbReference>
<dbReference type="PIRSF" id="PIRSF000521">
    <property type="entry name" value="Transaminase_4ab_Lys_Orn"/>
    <property type="match status" value="1"/>
</dbReference>
<dbReference type="SUPFAM" id="SSF53383">
    <property type="entry name" value="PLP-dependent transferases"/>
    <property type="match status" value="1"/>
</dbReference>
<dbReference type="PROSITE" id="PS00600">
    <property type="entry name" value="AA_TRANSFER_CLASS_3"/>
    <property type="match status" value="1"/>
</dbReference>
<organism>
    <name type="scientific">Xanthomonas campestris pv. campestris (strain ATCC 33913 / DSM 3586 / NCPPB 528 / LMG 568 / P 25)</name>
    <dbReference type="NCBI Taxonomy" id="190485"/>
    <lineage>
        <taxon>Bacteria</taxon>
        <taxon>Pseudomonadati</taxon>
        <taxon>Pseudomonadota</taxon>
        <taxon>Gammaproteobacteria</taxon>
        <taxon>Lysobacterales</taxon>
        <taxon>Lysobacteraceae</taxon>
        <taxon>Xanthomonas</taxon>
    </lineage>
</organism>